<reference key="1">
    <citation type="journal article" date="2008" name="J. Bacteriol.">
        <title>Genome sequence of Staphylococcus aureus strain Newman and comparative analysis of staphylococcal genomes: polymorphism and evolution of two major pathogenicity islands.</title>
        <authorList>
            <person name="Baba T."/>
            <person name="Bae T."/>
            <person name="Schneewind O."/>
            <person name="Takeuchi F."/>
            <person name="Hiramatsu K."/>
        </authorList>
    </citation>
    <scope>NUCLEOTIDE SEQUENCE [LARGE SCALE GENOMIC DNA]</scope>
    <source>
        <strain>Newman</strain>
    </source>
</reference>
<comment type="function">
    <text evidence="1">Catalyzes the condensation of the acetyl group of acetyl-CoA with 3-methyl-2-oxobutanoate (2-ketoisovalerate) to form 3-carboxy-3-hydroxy-4-methylpentanoate (2-isopropylmalate).</text>
</comment>
<comment type="catalytic activity">
    <reaction evidence="1">
        <text>3-methyl-2-oxobutanoate + acetyl-CoA + H2O = (2S)-2-isopropylmalate + CoA + H(+)</text>
        <dbReference type="Rhea" id="RHEA:21524"/>
        <dbReference type="ChEBI" id="CHEBI:1178"/>
        <dbReference type="ChEBI" id="CHEBI:11851"/>
        <dbReference type="ChEBI" id="CHEBI:15377"/>
        <dbReference type="ChEBI" id="CHEBI:15378"/>
        <dbReference type="ChEBI" id="CHEBI:57287"/>
        <dbReference type="ChEBI" id="CHEBI:57288"/>
        <dbReference type="EC" id="2.3.3.13"/>
    </reaction>
</comment>
<comment type="cofactor">
    <cofactor evidence="1">
        <name>Mn(2+)</name>
        <dbReference type="ChEBI" id="CHEBI:29035"/>
    </cofactor>
</comment>
<comment type="pathway">
    <text evidence="1">Amino-acid biosynthesis; L-leucine biosynthesis; L-leucine from 3-methyl-2-oxobutanoate: step 1/4.</text>
</comment>
<comment type="subunit">
    <text evidence="1">Homodimer.</text>
</comment>
<comment type="subcellular location">
    <subcellularLocation>
        <location evidence="1">Cytoplasm</location>
    </subcellularLocation>
</comment>
<comment type="similarity">
    <text evidence="1">Belongs to the alpha-IPM synthase/homocitrate synthase family. LeuA type 1 subfamily.</text>
</comment>
<name>LEU1_STAAE</name>
<evidence type="ECO:0000255" key="1">
    <source>
        <dbReference type="HAMAP-Rule" id="MF_01025"/>
    </source>
</evidence>
<dbReference type="EC" id="2.3.3.13" evidence="1"/>
<dbReference type="EMBL" id="AP009351">
    <property type="protein sequence ID" value="BAF68235.1"/>
    <property type="molecule type" value="Genomic_DNA"/>
</dbReference>
<dbReference type="RefSeq" id="WP_000094576.1">
    <property type="nucleotide sequence ID" value="NZ_JBBIAE010000015.1"/>
</dbReference>
<dbReference type="SMR" id="A6QIQ3"/>
<dbReference type="KEGG" id="sae:NWMN_1963"/>
<dbReference type="HOGENOM" id="CLU_022158_0_1_9"/>
<dbReference type="UniPathway" id="UPA00048">
    <property type="reaction ID" value="UER00070"/>
</dbReference>
<dbReference type="Proteomes" id="UP000006386">
    <property type="component" value="Chromosome"/>
</dbReference>
<dbReference type="GO" id="GO:0005737">
    <property type="term" value="C:cytoplasm"/>
    <property type="evidence" value="ECO:0007669"/>
    <property type="project" value="UniProtKB-SubCell"/>
</dbReference>
<dbReference type="GO" id="GO:0003852">
    <property type="term" value="F:2-isopropylmalate synthase activity"/>
    <property type="evidence" value="ECO:0007669"/>
    <property type="project" value="UniProtKB-UniRule"/>
</dbReference>
<dbReference type="GO" id="GO:0003985">
    <property type="term" value="F:acetyl-CoA C-acetyltransferase activity"/>
    <property type="evidence" value="ECO:0007669"/>
    <property type="project" value="UniProtKB-UniRule"/>
</dbReference>
<dbReference type="GO" id="GO:0030145">
    <property type="term" value="F:manganese ion binding"/>
    <property type="evidence" value="ECO:0007669"/>
    <property type="project" value="UniProtKB-UniRule"/>
</dbReference>
<dbReference type="GO" id="GO:0009098">
    <property type="term" value="P:L-leucine biosynthetic process"/>
    <property type="evidence" value="ECO:0007669"/>
    <property type="project" value="UniProtKB-UniRule"/>
</dbReference>
<dbReference type="CDD" id="cd07940">
    <property type="entry name" value="DRE_TIM_IPMS"/>
    <property type="match status" value="1"/>
</dbReference>
<dbReference type="FunFam" id="1.10.238.260:FF:000001">
    <property type="entry name" value="2-isopropylmalate synthase"/>
    <property type="match status" value="1"/>
</dbReference>
<dbReference type="FunFam" id="3.20.20.70:FF:000010">
    <property type="entry name" value="2-isopropylmalate synthase"/>
    <property type="match status" value="1"/>
</dbReference>
<dbReference type="FunFam" id="3.30.160.270:FF:000003">
    <property type="entry name" value="2-isopropylmalate synthase"/>
    <property type="match status" value="1"/>
</dbReference>
<dbReference type="Gene3D" id="1.10.238.260">
    <property type="match status" value="1"/>
</dbReference>
<dbReference type="Gene3D" id="3.30.160.270">
    <property type="match status" value="1"/>
</dbReference>
<dbReference type="Gene3D" id="3.20.20.70">
    <property type="entry name" value="Aldolase class I"/>
    <property type="match status" value="1"/>
</dbReference>
<dbReference type="HAMAP" id="MF_01025">
    <property type="entry name" value="LeuA_type1"/>
    <property type="match status" value="1"/>
</dbReference>
<dbReference type="InterPro" id="IPR050073">
    <property type="entry name" value="2-IPM_HCS-like"/>
</dbReference>
<dbReference type="InterPro" id="IPR013709">
    <property type="entry name" value="2-isopropylmalate_synth_dimer"/>
</dbReference>
<dbReference type="InterPro" id="IPR013785">
    <property type="entry name" value="Aldolase_TIM"/>
</dbReference>
<dbReference type="InterPro" id="IPR054691">
    <property type="entry name" value="LeuA/HCS_post-cat"/>
</dbReference>
<dbReference type="InterPro" id="IPR036230">
    <property type="entry name" value="LeuA_allosteric_dom_sf"/>
</dbReference>
<dbReference type="InterPro" id="IPR005671">
    <property type="entry name" value="LeuA_bact_synth"/>
</dbReference>
<dbReference type="InterPro" id="IPR000891">
    <property type="entry name" value="PYR_CT"/>
</dbReference>
<dbReference type="NCBIfam" id="TIGR00973">
    <property type="entry name" value="leuA_bact"/>
    <property type="match status" value="1"/>
</dbReference>
<dbReference type="NCBIfam" id="NF002086">
    <property type="entry name" value="PRK00915.1-3"/>
    <property type="match status" value="1"/>
</dbReference>
<dbReference type="NCBIfam" id="NF002088">
    <property type="entry name" value="PRK00915.1-5"/>
    <property type="match status" value="1"/>
</dbReference>
<dbReference type="PANTHER" id="PTHR10277:SF9">
    <property type="entry name" value="2-ISOPROPYLMALATE SYNTHASE 1, CHLOROPLASTIC-RELATED"/>
    <property type="match status" value="1"/>
</dbReference>
<dbReference type="PANTHER" id="PTHR10277">
    <property type="entry name" value="HOMOCITRATE SYNTHASE-RELATED"/>
    <property type="match status" value="1"/>
</dbReference>
<dbReference type="Pfam" id="PF22617">
    <property type="entry name" value="HCS_D2"/>
    <property type="match status" value="1"/>
</dbReference>
<dbReference type="Pfam" id="PF00682">
    <property type="entry name" value="HMGL-like"/>
    <property type="match status" value="1"/>
</dbReference>
<dbReference type="Pfam" id="PF08502">
    <property type="entry name" value="LeuA_dimer"/>
    <property type="match status" value="1"/>
</dbReference>
<dbReference type="SMART" id="SM00917">
    <property type="entry name" value="LeuA_dimer"/>
    <property type="match status" value="1"/>
</dbReference>
<dbReference type="SUPFAM" id="SSF110921">
    <property type="entry name" value="2-isopropylmalate synthase LeuA, allosteric (dimerisation) domain"/>
    <property type="match status" value="1"/>
</dbReference>
<dbReference type="SUPFAM" id="SSF51569">
    <property type="entry name" value="Aldolase"/>
    <property type="match status" value="1"/>
</dbReference>
<dbReference type="PROSITE" id="PS50991">
    <property type="entry name" value="PYR_CT"/>
    <property type="match status" value="1"/>
</dbReference>
<accession>A6QIQ3</accession>
<keyword id="KW-0028">Amino-acid biosynthesis</keyword>
<keyword id="KW-0100">Branched-chain amino acid biosynthesis</keyword>
<keyword id="KW-0963">Cytoplasm</keyword>
<keyword id="KW-0432">Leucine biosynthesis</keyword>
<keyword id="KW-0464">Manganese</keyword>
<keyword id="KW-0479">Metal-binding</keyword>
<keyword id="KW-0808">Transferase</keyword>
<feature type="chain" id="PRO_1000149307" description="2-isopropylmalate synthase">
    <location>
        <begin position="1"/>
        <end position="509"/>
    </location>
</feature>
<feature type="domain" description="Pyruvate carboxyltransferase" evidence="1">
    <location>
        <begin position="5"/>
        <end position="267"/>
    </location>
</feature>
<feature type="region of interest" description="Regulatory domain" evidence="1">
    <location>
        <begin position="391"/>
        <end position="509"/>
    </location>
</feature>
<feature type="binding site" evidence="1">
    <location>
        <position position="14"/>
    </location>
    <ligand>
        <name>Mn(2+)</name>
        <dbReference type="ChEBI" id="CHEBI:29035"/>
    </ligand>
</feature>
<feature type="binding site" evidence="1">
    <location>
        <position position="202"/>
    </location>
    <ligand>
        <name>Mn(2+)</name>
        <dbReference type="ChEBI" id="CHEBI:29035"/>
    </ligand>
</feature>
<feature type="binding site" evidence="1">
    <location>
        <position position="204"/>
    </location>
    <ligand>
        <name>Mn(2+)</name>
        <dbReference type="ChEBI" id="CHEBI:29035"/>
    </ligand>
</feature>
<feature type="binding site" evidence="1">
    <location>
        <position position="238"/>
    </location>
    <ligand>
        <name>Mn(2+)</name>
        <dbReference type="ChEBI" id="CHEBI:29035"/>
    </ligand>
</feature>
<organism>
    <name type="scientific">Staphylococcus aureus (strain Newman)</name>
    <dbReference type="NCBI Taxonomy" id="426430"/>
    <lineage>
        <taxon>Bacteria</taxon>
        <taxon>Bacillati</taxon>
        <taxon>Bacillota</taxon>
        <taxon>Bacilli</taxon>
        <taxon>Bacillales</taxon>
        <taxon>Staphylococcaceae</taxon>
        <taxon>Staphylococcus</taxon>
    </lineage>
</organism>
<gene>
    <name evidence="1" type="primary">leuA</name>
    <name type="ordered locus">NWMN_1963</name>
</gene>
<proteinExistence type="inferred from homology"/>
<protein>
    <recommendedName>
        <fullName evidence="1">2-isopropylmalate synthase</fullName>
        <ecNumber evidence="1">2.3.3.13</ecNumber>
    </recommendedName>
    <alternativeName>
        <fullName evidence="1">Alpha-IPM synthase</fullName>
    </alternativeName>
    <alternativeName>
        <fullName evidence="1">Alpha-isopropylmalate synthase</fullName>
    </alternativeName>
</protein>
<sequence>MSSHIQIFDTTLRDGEQTPGVNFTFDERLRIALQLEKWGVDVIEAGFPASSTGSFKSVQAIAQTLTTTAVCGLARCKKSDIDAVYEATKDAAKPVVHVFIATSPIHLEHKLKMSQEDVLASIKEHVTYAKQLFDVVQFSPEDATRTELPFLVKCVQTAVDAGATVINIPDTVGYSYHDEYAHIFKTLTESVTSSNEIIYSAHCHDDLGMAVSNSLAAIEGGARRIEGTVNGIGERAGNAALEEVALALYVRNDHYGAQTALNLEETKKTSDLISRYAGIRVPRNKAIVGQNAFSHESGIHQDGVLKHRETYEIMTPQLVGVSTTELPLGKLSGKHAFSEKLKALGYDIDKEAQIDLFKQFKAIADKKKSVSDRDIHAIIQGSEHEHQALYKLETLQLQYVSSGLQSAVVVVKDKEGHIYQDSSIGTGSIVAIYNAVDRIFQKETELIDYRINSVTEGTDAQAEVHVNLLIEGKTVNGFGIDHDILQASCKAYVEAHAKFAAENVEKVGN</sequence>